<evidence type="ECO:0000255" key="1"/>
<evidence type="ECO:0000269" key="2">
    <source>
    </source>
</evidence>
<evidence type="ECO:0000269" key="3">
    <source>
    </source>
</evidence>
<evidence type="ECO:0000269" key="4">
    <source>
    </source>
</evidence>
<evidence type="ECO:0000269" key="5">
    <source>
    </source>
</evidence>
<evidence type="ECO:0000269" key="6">
    <source>
    </source>
</evidence>
<evidence type="ECO:0000303" key="7">
    <source>
    </source>
</evidence>
<evidence type="ECO:0000305" key="8"/>
<evidence type="ECO:0000305" key="9">
    <source>
    </source>
</evidence>
<keyword id="KW-1048">Host nucleus</keyword>
<keyword id="KW-1185">Reference proteome</keyword>
<keyword id="KW-0964">Secreted</keyword>
<keyword id="KW-0732">Signal</keyword>
<keyword id="KW-0843">Virulence</keyword>
<organism>
    <name type="scientific">Phytophthora infestans (strain T30-4)</name>
    <name type="common">Potato late blight agent</name>
    <dbReference type="NCBI Taxonomy" id="403677"/>
    <lineage>
        <taxon>Eukaryota</taxon>
        <taxon>Sar</taxon>
        <taxon>Stramenopiles</taxon>
        <taxon>Oomycota</taxon>
        <taxon>Peronosporales</taxon>
        <taxon>Peronosporaceae</taxon>
        <taxon>Phytophthora</taxon>
    </lineage>
</organism>
<sequence>MRFLFYMLLACSAVVAGEQAAAAKELRLNSFVHRSFDAHIHAQRLLRDRRSVDEERGLPTVIEKTKTLFSTKVTDKTLQRWAANKKSPQHALIRLDLDNAGKDLFTKAKFADWVSFMTKRNPQNAEAAMLSALMTRYSDDVLSGMLIAAKKAPDTKTIATNLQIQQLRGWMKKGKTADDVFNLFNLKGKATSLDDLVSDGQFAPWVTYVTALNKGDPKKTNMMVVKTLTTYNKKTHKGVYDMLSASKNKQLAADLQRGQFDNWLANNVQFYDVSAMVGAKGTPRGSPQRLFVKDYVAAYNKKHQL</sequence>
<feature type="signal peptide" evidence="1">
    <location>
        <begin position="1"/>
        <end position="16"/>
    </location>
</feature>
<feature type="chain" id="PRO_5003012794" description="RxLR effector protein PexRD25">
    <location>
        <begin position="17"/>
        <end position="305"/>
    </location>
</feature>
<feature type="short sequence motif" description="RxLR-dEER" evidence="9">
    <location>
        <begin position="44"/>
        <end position="56"/>
    </location>
</feature>
<dbReference type="EMBL" id="DS028122">
    <property type="protein sequence ID" value="EEY67371.1"/>
    <property type="molecule type" value="Genomic_DNA"/>
</dbReference>
<dbReference type="RefSeq" id="XP_002906019.1">
    <property type="nucleotide sequence ID" value="XM_002905973.1"/>
</dbReference>
<dbReference type="SMR" id="D0N158"/>
<dbReference type="EnsemblProtists" id="PITG_04388T0">
    <property type="protein sequence ID" value="PITG_04388T0"/>
    <property type="gene ID" value="PITG_04388"/>
</dbReference>
<dbReference type="GeneID" id="9466258"/>
<dbReference type="KEGG" id="pif:PITG_04388"/>
<dbReference type="VEuPathDB" id="FungiDB:PITG_04388"/>
<dbReference type="eggNOG" id="ENOG502RF0X">
    <property type="taxonomic scope" value="Eukaryota"/>
</dbReference>
<dbReference type="HOGENOM" id="CLU_021192_0_1_1"/>
<dbReference type="InParanoid" id="D0N158"/>
<dbReference type="OMA" id="QFDNWLA"/>
<dbReference type="OrthoDB" id="105464at2759"/>
<dbReference type="Proteomes" id="UP000006643">
    <property type="component" value="Partially assembled WGS sequence"/>
</dbReference>
<dbReference type="GO" id="GO:0005576">
    <property type="term" value="C:extracellular region"/>
    <property type="evidence" value="ECO:0007669"/>
    <property type="project" value="UniProtKB-SubCell"/>
</dbReference>
<dbReference type="GO" id="GO:0044196">
    <property type="term" value="C:host cell nucleolus"/>
    <property type="evidence" value="ECO:0007669"/>
    <property type="project" value="UniProtKB-SubCell"/>
</dbReference>
<gene>
    <name evidence="7" type="primary">PexRD25</name>
    <name type="ORF">PITG_04388</name>
</gene>
<comment type="function">
    <text evidence="6">Effector that enhances P.infestans colonization of Nicotiana benthamiana leaves.</text>
</comment>
<comment type="subcellular location">
    <subcellularLocation>
        <location evidence="6">Secreted</location>
    </subcellularLocation>
    <subcellularLocation>
        <location evidence="6">Host nucleus</location>
    </subcellularLocation>
    <subcellularLocation>
        <location evidence="6">Host nucleus</location>
        <location evidence="6">Host nucleolus</location>
    </subcellularLocation>
</comment>
<comment type="induction">
    <text evidence="2 3 4 5">Expression is induced during host plant infection.</text>
</comment>
<comment type="domain">
    <text evidence="9">The RxLR-dEER motif acts to carry the protein into the host cell cytoplasm through binding to cell surface phosphatidylinositol-3-phosphate.</text>
</comment>
<comment type="similarity">
    <text evidence="8">Belongs to the RxLR effector family.</text>
</comment>
<proteinExistence type="evidence at transcript level"/>
<name>RD25_PHYIT</name>
<protein>
    <recommendedName>
        <fullName evidence="7">RxLR effector protein PexRD25</fullName>
    </recommendedName>
</protein>
<accession>D0N158</accession>
<reference key="1">
    <citation type="journal article" date="2009" name="Nature">
        <title>Genome sequence and analysis of the Irish potato famine pathogen Phytophthora infestans.</title>
        <authorList>
            <consortium name="The Broad Institute Genome Sequencing Platform"/>
            <person name="Haas B.J."/>
            <person name="Kamoun S."/>
            <person name="Zody M.C."/>
            <person name="Jiang R.H."/>
            <person name="Handsaker R.E."/>
            <person name="Cano L.M."/>
            <person name="Grabherr M."/>
            <person name="Kodira C.D."/>
            <person name="Raffaele S."/>
            <person name="Torto-Alalibo T."/>
            <person name="Bozkurt T.O."/>
            <person name="Ah-Fong A.M."/>
            <person name="Alvarado L."/>
            <person name="Anderson V.L."/>
            <person name="Armstrong M.R."/>
            <person name="Avrova A."/>
            <person name="Baxter L."/>
            <person name="Beynon J."/>
            <person name="Boevink P.C."/>
            <person name="Bollmann S.R."/>
            <person name="Bos J.I."/>
            <person name="Bulone V."/>
            <person name="Cai G."/>
            <person name="Cakir C."/>
            <person name="Carrington J.C."/>
            <person name="Chawner M."/>
            <person name="Conti L."/>
            <person name="Costanzo S."/>
            <person name="Ewan R."/>
            <person name="Fahlgren N."/>
            <person name="Fischbach M.A."/>
            <person name="Fugelstad J."/>
            <person name="Gilroy E.M."/>
            <person name="Gnerre S."/>
            <person name="Green P.J."/>
            <person name="Grenville-Briggs L.J."/>
            <person name="Griffith J."/>
            <person name="Grunwald N.J."/>
            <person name="Horn K."/>
            <person name="Horner N.R."/>
            <person name="Hu C.H."/>
            <person name="Huitema E."/>
            <person name="Jeong D.H."/>
            <person name="Jones A.M."/>
            <person name="Jones J.D."/>
            <person name="Jones R.W."/>
            <person name="Karlsson E.K."/>
            <person name="Kunjeti S.G."/>
            <person name="Lamour K."/>
            <person name="Liu Z."/>
            <person name="Ma L."/>
            <person name="Maclean D."/>
            <person name="Chibucos M.C."/>
            <person name="McDonald H."/>
            <person name="McWalters J."/>
            <person name="Meijer H.J."/>
            <person name="Morgan W."/>
            <person name="Morris P.F."/>
            <person name="Munro C.A."/>
            <person name="O'Neill K."/>
            <person name="Ospina-Giraldo M."/>
            <person name="Pinzon A."/>
            <person name="Pritchard L."/>
            <person name="Ramsahoye B."/>
            <person name="Ren Q."/>
            <person name="Restrepo S."/>
            <person name="Roy S."/>
            <person name="Sadanandom A."/>
            <person name="Savidor A."/>
            <person name="Schornack S."/>
            <person name="Schwartz D.C."/>
            <person name="Schumann U.D."/>
            <person name="Schwessinger B."/>
            <person name="Seyer L."/>
            <person name="Sharpe T."/>
            <person name="Silvar C."/>
            <person name="Song J."/>
            <person name="Studholme D.J."/>
            <person name="Sykes S."/>
            <person name="Thines M."/>
            <person name="van de Vondervoort P.J."/>
            <person name="Phuntumart V."/>
            <person name="Wawra S."/>
            <person name="Weide R."/>
            <person name="Win J."/>
            <person name="Young C."/>
            <person name="Zhou S."/>
            <person name="Fry W."/>
            <person name="Meyers B.C."/>
            <person name="van West P."/>
            <person name="Ristaino J."/>
            <person name="Govers F."/>
            <person name="Birch P.R."/>
            <person name="Whisson S.C."/>
            <person name="Judelson H.S."/>
            <person name="Nusbaum C."/>
        </authorList>
    </citation>
    <scope>NUCLEOTIDE SEQUENCE [LARGE SCALE GENOMIC DNA]</scope>
    <source>
        <strain>T30-4</strain>
    </source>
</reference>
<reference key="2">
    <citation type="journal article" date="2007" name="Nature">
        <title>A translocation signal for delivery of oomycete effector proteins into host plant cells.</title>
        <authorList>
            <person name="Whisson S.C."/>
            <person name="Boevink P.C."/>
            <person name="Moleleki L."/>
            <person name="Avrova A.O."/>
            <person name="Morales J.G."/>
            <person name="Gilroy E.M."/>
            <person name="Armstrong M.R."/>
            <person name="Grouffaud S."/>
            <person name="van West P."/>
            <person name="Chapman S."/>
            <person name="Hein I."/>
            <person name="Toth I.K."/>
            <person name="Pritchard L."/>
            <person name="Birch P.R."/>
        </authorList>
    </citation>
    <scope>INDUCTION</scope>
    <scope>DOMAIN</scope>
</reference>
<reference key="3">
    <citation type="journal article" date="2009" name="Plant Cell">
        <title>In planta expression screens of Phytophthora infestans RXLR effectors reveal diverse phenotypes, including activation of the Solanum bulbocastanum disease resistance protein Rpi-blb2.</title>
        <authorList>
            <person name="Oh S.K."/>
            <person name="Young C."/>
            <person name="Lee M."/>
            <person name="Oliva R."/>
            <person name="Bozkurt T.O."/>
            <person name="Cano L.M."/>
            <person name="Win J."/>
            <person name="Bos J.I."/>
            <person name="Liu H.Y."/>
            <person name="van Damme M."/>
            <person name="Morgan W."/>
            <person name="Choi D."/>
            <person name="Van der Vossen E.A."/>
            <person name="Vleeshouwers V.G."/>
            <person name="Kamoun S."/>
        </authorList>
    </citation>
    <scope>INDUCTION</scope>
</reference>
<reference key="4">
    <citation type="journal article" date="2017" name="BMC Genomics">
        <title>RNA-seq of life stages of the oomycete Phytophthora infestans reveals dynamic changes in metabolic, signal transduction, and pathogenesis genes and a major role for calcium signaling in development.</title>
        <authorList>
            <person name="Ah-Fong A.M."/>
            <person name="Kim K.S."/>
            <person name="Judelson H.S."/>
        </authorList>
    </citation>
    <scope>INDUCTION</scope>
</reference>
<reference key="5">
    <citation type="journal article" date="2017" name="Front. Plant Sci.">
        <title>Conserved RXLR effector genes of Phytophthora infestans expressed at the early stage of potato infection are suppressive to host defense.</title>
        <authorList>
            <person name="Yin J."/>
            <person name="Gu B."/>
            <person name="Huang G."/>
            <person name="Tian Y."/>
            <person name="Quan J."/>
            <person name="Lindqvist-Kreuze H."/>
            <person name="Shan W."/>
        </authorList>
    </citation>
    <scope>INDUCTION</scope>
</reference>
<reference key="6">
    <citation type="journal article" date="2019" name="J. Exp. Bot.">
        <title>Phytophthora infestans RXLR effectors act in concert at diverse subcellular locations to enhance host colonization.</title>
        <authorList>
            <person name="Wang S."/>
            <person name="McLellan H."/>
            <person name="Bukharova T."/>
            <person name="He Q."/>
            <person name="Murphy F."/>
            <person name="Shi J."/>
            <person name="Sun S."/>
            <person name="van Weymers P."/>
            <person name="Ren Y."/>
            <person name="Thilliez G."/>
            <person name="Wang H."/>
            <person name="Chen X."/>
            <person name="Engelhardt S."/>
            <person name="Vleeshouwers V."/>
            <person name="Gilroy E.M."/>
            <person name="Whisson S.C."/>
            <person name="Hein I."/>
            <person name="Wang X."/>
            <person name="Tian Z."/>
            <person name="Birch P.R.J."/>
            <person name="Boevink P.C."/>
        </authorList>
    </citation>
    <scope>FUNCTION</scope>
    <scope>SUBCELLULAR LOCATION</scope>
</reference>